<comment type="function">
    <text evidence="1">Associates with the EF-Tu.GDP complex and induces the exchange of GDP to GTP. It remains bound to the aminoacyl-tRNA.EF-Tu.GTP complex up to the GTP hydrolysis stage on the ribosome.</text>
</comment>
<comment type="subcellular location">
    <subcellularLocation>
        <location evidence="1">Cytoplasm</location>
    </subcellularLocation>
</comment>
<comment type="similarity">
    <text evidence="1">Belongs to the EF-Ts family.</text>
</comment>
<gene>
    <name evidence="1" type="primary">tsf</name>
    <name type="ordered locus">RBAM_016340</name>
</gene>
<accession>A7Z4S1</accession>
<name>EFTS_BACVZ</name>
<dbReference type="EMBL" id="CP000560">
    <property type="protein sequence ID" value="ABS73997.1"/>
    <property type="molecule type" value="Genomic_DNA"/>
</dbReference>
<dbReference type="RefSeq" id="WP_007611455.1">
    <property type="nucleotide sequence ID" value="NC_009725.2"/>
</dbReference>
<dbReference type="SMR" id="A7Z4S1"/>
<dbReference type="GeneID" id="93080767"/>
<dbReference type="KEGG" id="bay:RBAM_016340"/>
<dbReference type="HOGENOM" id="CLU_047155_0_2_9"/>
<dbReference type="Proteomes" id="UP000001120">
    <property type="component" value="Chromosome"/>
</dbReference>
<dbReference type="GO" id="GO:0005737">
    <property type="term" value="C:cytoplasm"/>
    <property type="evidence" value="ECO:0007669"/>
    <property type="project" value="UniProtKB-SubCell"/>
</dbReference>
<dbReference type="GO" id="GO:0003746">
    <property type="term" value="F:translation elongation factor activity"/>
    <property type="evidence" value="ECO:0007669"/>
    <property type="project" value="UniProtKB-UniRule"/>
</dbReference>
<dbReference type="CDD" id="cd14275">
    <property type="entry name" value="UBA_EF-Ts"/>
    <property type="match status" value="1"/>
</dbReference>
<dbReference type="FunFam" id="1.10.286.20:FF:000003">
    <property type="entry name" value="Elongation factor Ts"/>
    <property type="match status" value="1"/>
</dbReference>
<dbReference type="FunFam" id="1.10.8.10:FF:000001">
    <property type="entry name" value="Elongation factor Ts"/>
    <property type="match status" value="1"/>
</dbReference>
<dbReference type="Gene3D" id="1.10.286.20">
    <property type="match status" value="1"/>
</dbReference>
<dbReference type="Gene3D" id="1.10.8.10">
    <property type="entry name" value="DNA helicase RuvA subunit, C-terminal domain"/>
    <property type="match status" value="1"/>
</dbReference>
<dbReference type="Gene3D" id="3.30.479.20">
    <property type="entry name" value="Elongation factor Ts, dimerisation domain"/>
    <property type="match status" value="2"/>
</dbReference>
<dbReference type="HAMAP" id="MF_00050">
    <property type="entry name" value="EF_Ts"/>
    <property type="match status" value="1"/>
</dbReference>
<dbReference type="InterPro" id="IPR036402">
    <property type="entry name" value="EF-Ts_dimer_sf"/>
</dbReference>
<dbReference type="InterPro" id="IPR001816">
    <property type="entry name" value="Transl_elong_EFTs/EF1B"/>
</dbReference>
<dbReference type="InterPro" id="IPR014039">
    <property type="entry name" value="Transl_elong_EFTs/EF1B_dimer"/>
</dbReference>
<dbReference type="InterPro" id="IPR018101">
    <property type="entry name" value="Transl_elong_Ts_CS"/>
</dbReference>
<dbReference type="InterPro" id="IPR009060">
    <property type="entry name" value="UBA-like_sf"/>
</dbReference>
<dbReference type="NCBIfam" id="TIGR00116">
    <property type="entry name" value="tsf"/>
    <property type="match status" value="1"/>
</dbReference>
<dbReference type="PANTHER" id="PTHR11741">
    <property type="entry name" value="ELONGATION FACTOR TS"/>
    <property type="match status" value="1"/>
</dbReference>
<dbReference type="PANTHER" id="PTHR11741:SF0">
    <property type="entry name" value="ELONGATION FACTOR TS, MITOCHONDRIAL"/>
    <property type="match status" value="1"/>
</dbReference>
<dbReference type="Pfam" id="PF00889">
    <property type="entry name" value="EF_TS"/>
    <property type="match status" value="1"/>
</dbReference>
<dbReference type="SUPFAM" id="SSF54713">
    <property type="entry name" value="Elongation factor Ts (EF-Ts), dimerisation domain"/>
    <property type="match status" value="2"/>
</dbReference>
<dbReference type="SUPFAM" id="SSF46934">
    <property type="entry name" value="UBA-like"/>
    <property type="match status" value="1"/>
</dbReference>
<dbReference type="PROSITE" id="PS01126">
    <property type="entry name" value="EF_TS_1"/>
    <property type="match status" value="1"/>
</dbReference>
<dbReference type="PROSITE" id="PS01127">
    <property type="entry name" value="EF_TS_2"/>
    <property type="match status" value="1"/>
</dbReference>
<sequence length="293" mass="32307">MAITAQQVKELRQKTGAGMMDCKKALTETDGDMDKAIDLLREKGIAKAAKKADRIAAEGSTLIKTDGNKGVILEVNSETDFVAKNEGFKELLNTLADHLLANAPADLEEAMGQKMENGSTVEEYITSNVAKIGEKITLRRFAVISKEDSEAFGAYLHMGGRIGVLSVLSGTTDEDLAKDIAMHVAAVNPRYISRDQVSEEEANHERQILTQQALQEGKPENIVAKMVEGRLNKFFEEICLLDQAFVKNPDEKVKQVVAAKNASVKTYVRYEVGEGIEKRQENFAEEVMNQVKK</sequence>
<keyword id="KW-0963">Cytoplasm</keyword>
<keyword id="KW-0251">Elongation factor</keyword>
<keyword id="KW-0648">Protein biosynthesis</keyword>
<reference key="1">
    <citation type="journal article" date="2007" name="Nat. Biotechnol.">
        <title>Comparative analysis of the complete genome sequence of the plant growth-promoting bacterium Bacillus amyloliquefaciens FZB42.</title>
        <authorList>
            <person name="Chen X.H."/>
            <person name="Koumoutsi A."/>
            <person name="Scholz R."/>
            <person name="Eisenreich A."/>
            <person name="Schneider K."/>
            <person name="Heinemeyer I."/>
            <person name="Morgenstern B."/>
            <person name="Voss B."/>
            <person name="Hess W.R."/>
            <person name="Reva O."/>
            <person name="Junge H."/>
            <person name="Voigt B."/>
            <person name="Jungblut P.R."/>
            <person name="Vater J."/>
            <person name="Suessmuth R."/>
            <person name="Liesegang H."/>
            <person name="Strittmatter A."/>
            <person name="Gottschalk G."/>
            <person name="Borriss R."/>
        </authorList>
    </citation>
    <scope>NUCLEOTIDE SEQUENCE [LARGE SCALE GENOMIC DNA]</scope>
    <source>
        <strain>DSM 23117 / BGSC 10A6 / LMG 26770 / FZB42</strain>
    </source>
</reference>
<evidence type="ECO:0000255" key="1">
    <source>
        <dbReference type="HAMAP-Rule" id="MF_00050"/>
    </source>
</evidence>
<feature type="chain" id="PRO_1000006054" description="Elongation factor Ts">
    <location>
        <begin position="1"/>
        <end position="293"/>
    </location>
</feature>
<feature type="region of interest" description="Involved in Mg(2+) ion dislocation from EF-Tu" evidence="1">
    <location>
        <begin position="79"/>
        <end position="82"/>
    </location>
</feature>
<organism>
    <name type="scientific">Bacillus velezensis (strain DSM 23117 / BGSC 10A6 / LMG 26770 / FZB42)</name>
    <name type="common">Bacillus amyloliquefaciens subsp. plantarum</name>
    <dbReference type="NCBI Taxonomy" id="326423"/>
    <lineage>
        <taxon>Bacteria</taxon>
        <taxon>Bacillati</taxon>
        <taxon>Bacillota</taxon>
        <taxon>Bacilli</taxon>
        <taxon>Bacillales</taxon>
        <taxon>Bacillaceae</taxon>
        <taxon>Bacillus</taxon>
        <taxon>Bacillus amyloliquefaciens group</taxon>
    </lineage>
</organism>
<proteinExistence type="inferred from homology"/>
<protein>
    <recommendedName>
        <fullName evidence="1">Elongation factor Ts</fullName>
        <shortName evidence="1">EF-Ts</shortName>
    </recommendedName>
</protein>